<feature type="chain" id="PRO_0000324669" description="Beta-1,4-mannosyltransferase bre-3">
    <location>
        <begin position="1"/>
        <end position="455"/>
    </location>
</feature>
<proteinExistence type="inferred from homology"/>
<gene>
    <name evidence="1" type="primary">bre-3</name>
    <name type="ORF">CBG10082</name>
</gene>
<dbReference type="EC" id="2.4.1.-"/>
<dbReference type="EMBL" id="HE601459">
    <property type="protein sequence ID" value="CAP29592.3"/>
    <property type="molecule type" value="Genomic_DNA"/>
</dbReference>
<dbReference type="FunCoup" id="A8XAC4">
    <property type="interactions" value="838"/>
</dbReference>
<dbReference type="STRING" id="6238.A8XAC4"/>
<dbReference type="EnsemblMetazoa" id="CBG10082.1">
    <property type="protein sequence ID" value="CBG10082.1"/>
    <property type="gene ID" value="WBGene00031561"/>
</dbReference>
<dbReference type="KEGG" id="cbr:CBG_10082"/>
<dbReference type="CTD" id="8583737"/>
<dbReference type="WormBase" id="CBG10082">
    <property type="protein sequence ID" value="CBP02470"/>
    <property type="gene ID" value="WBGene00031561"/>
    <property type="gene designation" value="Cbr-bre-3"/>
</dbReference>
<dbReference type="eggNOG" id="ENOG502QTGI">
    <property type="taxonomic scope" value="Eukaryota"/>
</dbReference>
<dbReference type="HOGENOM" id="CLU_044554_0_0_1"/>
<dbReference type="InParanoid" id="A8XAC4"/>
<dbReference type="OMA" id="CIENIAV"/>
<dbReference type="UniPathway" id="UPA00378"/>
<dbReference type="Proteomes" id="UP000008549">
    <property type="component" value="Unassembled WGS sequence"/>
</dbReference>
<dbReference type="GO" id="GO:0005737">
    <property type="term" value="C:cytoplasm"/>
    <property type="evidence" value="ECO:0000318"/>
    <property type="project" value="GO_Central"/>
</dbReference>
<dbReference type="GO" id="GO:0019187">
    <property type="term" value="F:beta-1,4-mannosyltransferase activity"/>
    <property type="evidence" value="ECO:0000318"/>
    <property type="project" value="GO_Central"/>
</dbReference>
<dbReference type="GO" id="GO:0016051">
    <property type="term" value="P:carbohydrate biosynthetic process"/>
    <property type="evidence" value="ECO:0007669"/>
    <property type="project" value="EnsemblMetazoa"/>
</dbReference>
<dbReference type="GO" id="GO:0006486">
    <property type="term" value="P:protein glycosylation"/>
    <property type="evidence" value="ECO:0007669"/>
    <property type="project" value="UniProtKB-UniPathway"/>
</dbReference>
<dbReference type="GO" id="GO:0009636">
    <property type="term" value="P:response to toxic substance"/>
    <property type="evidence" value="ECO:0007669"/>
    <property type="project" value="EnsemblMetazoa"/>
</dbReference>
<dbReference type="FunFam" id="3.90.550.10:FF:000175">
    <property type="entry name" value="Beta-1,4-mannosyltransferase bre-3"/>
    <property type="match status" value="1"/>
</dbReference>
<dbReference type="Gene3D" id="3.90.550.10">
    <property type="entry name" value="Spore Coat Polysaccharide Biosynthesis Protein SpsA, Chain A"/>
    <property type="match status" value="1"/>
</dbReference>
<dbReference type="InterPro" id="IPR027389">
    <property type="entry name" value="B_mannosylTrfase_Bre-3/Egh"/>
</dbReference>
<dbReference type="InterPro" id="IPR001173">
    <property type="entry name" value="Glyco_trans_2-like"/>
</dbReference>
<dbReference type="InterPro" id="IPR029044">
    <property type="entry name" value="Nucleotide-diphossugar_trans"/>
</dbReference>
<dbReference type="PANTHER" id="PTHR16779">
    <property type="entry name" value="BETA-1,4-MANNOSYLTRANSFERASE EGH"/>
    <property type="match status" value="1"/>
</dbReference>
<dbReference type="PANTHER" id="PTHR16779:SF1">
    <property type="entry name" value="BETA-1,4-MANNOSYLTRANSFERASE EGH"/>
    <property type="match status" value="1"/>
</dbReference>
<dbReference type="Pfam" id="PF13632">
    <property type="entry name" value="Glyco_trans_2_3"/>
    <property type="match status" value="1"/>
</dbReference>
<dbReference type="SUPFAM" id="SSF53448">
    <property type="entry name" value="Nucleotide-diphospho-sugar transferases"/>
    <property type="match status" value="1"/>
</dbReference>
<keyword id="KW-0963">Cytoplasm</keyword>
<keyword id="KW-0328">Glycosyltransferase</keyword>
<keyword id="KW-0978">Insecticide resistance</keyword>
<keyword id="KW-1185">Reference proteome</keyword>
<keyword id="KW-0808">Transferase</keyword>
<protein>
    <recommendedName>
        <fullName>Beta-1,4-mannosyltransferase bre-3</fullName>
        <ecNumber>2.4.1.-</ecNumber>
    </recommendedName>
    <alternativeName>
        <fullName>Bacillus thuringiensis toxin-resistant protein 3</fullName>
        <shortName>Bt toxin-resistant protein 3</shortName>
    </alternativeName>
</protein>
<comment type="function">
    <text evidence="1">Glycosyltransferase with a proposed role in glycosphingolipid biosynthesis. Involved in susceptibility to pore-forming crystal toxins in conjunction with bre-1, bre-2 and bre-4. Involved in resistance to the nematotoxic C.cinerea galectin Cgl2. Has a role in determining brood size (By similarity).</text>
</comment>
<comment type="pathway">
    <text>Protein modification; protein glycosylation.</text>
</comment>
<comment type="subcellular location">
    <subcellularLocation>
        <location evidence="1">Cytoplasm</location>
    </subcellularLocation>
    <text evidence="1">In punctate structures throughout the cell.</text>
</comment>
<comment type="similarity">
    <text evidence="2">Belongs to the glycosyltransferase 2 family.</text>
</comment>
<name>BRE3_CAEBR</name>
<sequence length="455" mass="51627">MNCEVKHALHCAVLVAWIVCFAYFCGVFTEPAEGTVPESPVASYGLVWTICLYLLRFTALLVLPQCLCNLCGLMMFNAFREKVQLKAAPLLSPFVCFRVVTKGNFPLLVKENIDANMKTCFEAGMENFIFEVVTDKAINLPPNPRVREVVVPTAYRTKSGAKFKARALQYCLEDDVNILQPTDWIVHLDEETLLTTNAICGILNFCEDGKHQFGQGVITYANGDIVNWLTTLSDSFRVADDMGKLRFQFKLFHKPLFGWKGSYVVTQVEAERDVSYDHGMEGSIAEDCFFSMVAMKHGYTFDFIEGEMHEKSPFTMWDFLQQRKRWLQGILLTVHSSKIAVVHKALLALSLYAWATMPLTSLQVFLCPLFPLPRCLPFDFLLSFVGALNLYMYIFGVVKSFSHKYRNSFLRLGMYLAGALMTIPFNILIENAAVLVGMFGRKDQFYIVNKDIQTV</sequence>
<reference key="1">
    <citation type="journal article" date="2003" name="PLoS Biol.">
        <title>The genome sequence of Caenorhabditis briggsae: a platform for comparative genomics.</title>
        <authorList>
            <person name="Stein L.D."/>
            <person name="Bao Z."/>
            <person name="Blasiar D."/>
            <person name="Blumenthal T."/>
            <person name="Brent M.R."/>
            <person name="Chen N."/>
            <person name="Chinwalla A."/>
            <person name="Clarke L."/>
            <person name="Clee C."/>
            <person name="Coghlan A."/>
            <person name="Coulson A."/>
            <person name="D'Eustachio P."/>
            <person name="Fitch D.H.A."/>
            <person name="Fulton L.A."/>
            <person name="Fulton R.E."/>
            <person name="Griffiths-Jones S."/>
            <person name="Harris T.W."/>
            <person name="Hillier L.W."/>
            <person name="Kamath R."/>
            <person name="Kuwabara P.E."/>
            <person name="Mardis E.R."/>
            <person name="Marra M.A."/>
            <person name="Miner T.L."/>
            <person name="Minx P."/>
            <person name="Mullikin J.C."/>
            <person name="Plumb R.W."/>
            <person name="Rogers J."/>
            <person name="Schein J.E."/>
            <person name="Sohrmann M."/>
            <person name="Spieth J."/>
            <person name="Stajich J.E."/>
            <person name="Wei C."/>
            <person name="Willey D."/>
            <person name="Wilson R.K."/>
            <person name="Durbin R.M."/>
            <person name="Waterston R.H."/>
        </authorList>
    </citation>
    <scope>NUCLEOTIDE SEQUENCE [LARGE SCALE GENOMIC DNA]</scope>
    <source>
        <strain>AF16</strain>
    </source>
</reference>
<accession>A8XAC4</accession>
<organism>
    <name type="scientific">Caenorhabditis briggsae</name>
    <dbReference type="NCBI Taxonomy" id="6238"/>
    <lineage>
        <taxon>Eukaryota</taxon>
        <taxon>Metazoa</taxon>
        <taxon>Ecdysozoa</taxon>
        <taxon>Nematoda</taxon>
        <taxon>Chromadorea</taxon>
        <taxon>Rhabditida</taxon>
        <taxon>Rhabditina</taxon>
        <taxon>Rhabditomorpha</taxon>
        <taxon>Rhabditoidea</taxon>
        <taxon>Rhabditidae</taxon>
        <taxon>Peloderinae</taxon>
        <taxon>Caenorhabditis</taxon>
    </lineage>
</organism>
<evidence type="ECO:0000250" key="1">
    <source>
        <dbReference type="UniProtKB" id="Q03562"/>
    </source>
</evidence>
<evidence type="ECO:0000255" key="2"/>